<dbReference type="EC" id="3.4.25.2" evidence="1"/>
<dbReference type="EMBL" id="CP000786">
    <property type="protein sequence ID" value="ABZ98446.1"/>
    <property type="molecule type" value="Genomic_DNA"/>
</dbReference>
<dbReference type="RefSeq" id="WP_012389310.1">
    <property type="nucleotide sequence ID" value="NC_010602.1"/>
</dbReference>
<dbReference type="SMR" id="B0SKV3"/>
<dbReference type="STRING" id="456481.LEPBI_I2355"/>
<dbReference type="MEROPS" id="T01.006"/>
<dbReference type="KEGG" id="lbi:LEPBI_I2355"/>
<dbReference type="HOGENOM" id="CLU_093872_1_0_12"/>
<dbReference type="OrthoDB" id="9804884at2"/>
<dbReference type="BioCyc" id="LBIF456481:LEPBI_RS11630-MONOMER"/>
<dbReference type="Proteomes" id="UP000001847">
    <property type="component" value="Chromosome I"/>
</dbReference>
<dbReference type="GO" id="GO:0009376">
    <property type="term" value="C:HslUV protease complex"/>
    <property type="evidence" value="ECO:0007669"/>
    <property type="project" value="UniProtKB-UniRule"/>
</dbReference>
<dbReference type="GO" id="GO:0005839">
    <property type="term" value="C:proteasome core complex"/>
    <property type="evidence" value="ECO:0007669"/>
    <property type="project" value="InterPro"/>
</dbReference>
<dbReference type="GO" id="GO:0046872">
    <property type="term" value="F:metal ion binding"/>
    <property type="evidence" value="ECO:0007669"/>
    <property type="project" value="UniProtKB-KW"/>
</dbReference>
<dbReference type="GO" id="GO:0004298">
    <property type="term" value="F:threonine-type endopeptidase activity"/>
    <property type="evidence" value="ECO:0007669"/>
    <property type="project" value="UniProtKB-KW"/>
</dbReference>
<dbReference type="GO" id="GO:0051603">
    <property type="term" value="P:proteolysis involved in protein catabolic process"/>
    <property type="evidence" value="ECO:0007669"/>
    <property type="project" value="InterPro"/>
</dbReference>
<dbReference type="CDD" id="cd01913">
    <property type="entry name" value="protease_HslV"/>
    <property type="match status" value="1"/>
</dbReference>
<dbReference type="FunFam" id="3.60.20.10:FF:000002">
    <property type="entry name" value="ATP-dependent protease subunit HslV"/>
    <property type="match status" value="1"/>
</dbReference>
<dbReference type="Gene3D" id="3.60.20.10">
    <property type="entry name" value="Glutamine Phosphoribosylpyrophosphate, subunit 1, domain 1"/>
    <property type="match status" value="1"/>
</dbReference>
<dbReference type="HAMAP" id="MF_00248">
    <property type="entry name" value="HslV"/>
    <property type="match status" value="1"/>
</dbReference>
<dbReference type="InterPro" id="IPR022281">
    <property type="entry name" value="ATP-dep_Prtase_HsIV_su"/>
</dbReference>
<dbReference type="InterPro" id="IPR029055">
    <property type="entry name" value="Ntn_hydrolases_N"/>
</dbReference>
<dbReference type="InterPro" id="IPR001353">
    <property type="entry name" value="Proteasome_sua/b"/>
</dbReference>
<dbReference type="InterPro" id="IPR023333">
    <property type="entry name" value="Proteasome_suB-type"/>
</dbReference>
<dbReference type="NCBIfam" id="TIGR03692">
    <property type="entry name" value="ATP_dep_HslV"/>
    <property type="match status" value="1"/>
</dbReference>
<dbReference type="NCBIfam" id="NF003964">
    <property type="entry name" value="PRK05456.1"/>
    <property type="match status" value="1"/>
</dbReference>
<dbReference type="PANTHER" id="PTHR32194:SF0">
    <property type="entry name" value="ATP-DEPENDENT PROTEASE SUBUNIT HSLV"/>
    <property type="match status" value="1"/>
</dbReference>
<dbReference type="PANTHER" id="PTHR32194">
    <property type="entry name" value="METALLOPROTEASE TLDD"/>
    <property type="match status" value="1"/>
</dbReference>
<dbReference type="Pfam" id="PF00227">
    <property type="entry name" value="Proteasome"/>
    <property type="match status" value="1"/>
</dbReference>
<dbReference type="PIRSF" id="PIRSF039093">
    <property type="entry name" value="HslV"/>
    <property type="match status" value="1"/>
</dbReference>
<dbReference type="SUPFAM" id="SSF56235">
    <property type="entry name" value="N-terminal nucleophile aminohydrolases (Ntn hydrolases)"/>
    <property type="match status" value="1"/>
</dbReference>
<dbReference type="PROSITE" id="PS51476">
    <property type="entry name" value="PROTEASOME_BETA_2"/>
    <property type="match status" value="1"/>
</dbReference>
<keyword id="KW-0021">Allosteric enzyme</keyword>
<keyword id="KW-0963">Cytoplasm</keyword>
<keyword id="KW-0378">Hydrolase</keyword>
<keyword id="KW-0479">Metal-binding</keyword>
<keyword id="KW-0645">Protease</keyword>
<keyword id="KW-1185">Reference proteome</keyword>
<keyword id="KW-0915">Sodium</keyword>
<keyword id="KW-0346">Stress response</keyword>
<keyword id="KW-0888">Threonine protease</keyword>
<organism>
    <name type="scientific">Leptospira biflexa serovar Patoc (strain Patoc 1 / ATCC 23582 / Paris)</name>
    <dbReference type="NCBI Taxonomy" id="456481"/>
    <lineage>
        <taxon>Bacteria</taxon>
        <taxon>Pseudomonadati</taxon>
        <taxon>Spirochaetota</taxon>
        <taxon>Spirochaetia</taxon>
        <taxon>Leptospirales</taxon>
        <taxon>Leptospiraceae</taxon>
        <taxon>Leptospira</taxon>
    </lineage>
</organism>
<name>HSLV_LEPBP</name>
<proteinExistence type="inferred from homology"/>
<evidence type="ECO:0000255" key="1">
    <source>
        <dbReference type="HAMAP-Rule" id="MF_00248"/>
    </source>
</evidence>
<reference key="1">
    <citation type="journal article" date="2008" name="PLoS ONE">
        <title>Genome sequence of the saprophyte Leptospira biflexa provides insights into the evolution of Leptospira and the pathogenesis of leptospirosis.</title>
        <authorList>
            <person name="Picardeau M."/>
            <person name="Bulach D.M."/>
            <person name="Bouchier C."/>
            <person name="Zuerner R.L."/>
            <person name="Zidane N."/>
            <person name="Wilson P.J."/>
            <person name="Creno S."/>
            <person name="Kuczek E.S."/>
            <person name="Bommezzadri S."/>
            <person name="Davis J.C."/>
            <person name="McGrath A."/>
            <person name="Johnson M.J."/>
            <person name="Boursaux-Eude C."/>
            <person name="Seemann T."/>
            <person name="Rouy Z."/>
            <person name="Coppel R.L."/>
            <person name="Rood J.I."/>
            <person name="Lajus A."/>
            <person name="Davies J.K."/>
            <person name="Medigue C."/>
            <person name="Adler B."/>
        </authorList>
    </citation>
    <scope>NUCLEOTIDE SEQUENCE [LARGE SCALE GENOMIC DNA]</scope>
    <source>
        <strain>Patoc 1 / ATCC 23582 / Paris</strain>
    </source>
</reference>
<protein>
    <recommendedName>
        <fullName evidence="1">ATP-dependent protease subunit HslV</fullName>
        <ecNumber evidence="1">3.4.25.2</ecNumber>
    </recommendedName>
</protein>
<accession>B0SKV3</accession>
<sequence length="177" mass="19076">METIHATTILSVRKNGKIAVGGDGQVSMGNTVMKHTAKKVRRLYNGKVIAGFAGSAADAFTLFELFEKKLIEHGGSVSRAAVELAREWRMDRMLRRLEALLIVCDANESFLISGTGDVISPDDGVLAIGSGGNFALSAARALVENTDLDPKEIITKAMNITADICIYTNHNLVIEEL</sequence>
<comment type="function">
    <text evidence="1">Protease subunit of a proteasome-like degradation complex believed to be a general protein degrading machinery.</text>
</comment>
<comment type="catalytic activity">
    <reaction evidence="1">
        <text>ATP-dependent cleavage of peptide bonds with broad specificity.</text>
        <dbReference type="EC" id="3.4.25.2"/>
    </reaction>
</comment>
<comment type="activity regulation">
    <text evidence="1">Allosterically activated by HslU binding.</text>
</comment>
<comment type="subunit">
    <text evidence="1">A double ring-shaped homohexamer of HslV is capped on each side by a ring-shaped HslU homohexamer. The assembly of the HslU/HslV complex is dependent on binding of ATP.</text>
</comment>
<comment type="subcellular location">
    <subcellularLocation>
        <location evidence="1">Cytoplasm</location>
    </subcellularLocation>
</comment>
<comment type="similarity">
    <text evidence="1">Belongs to the peptidase T1B family. HslV subfamily.</text>
</comment>
<feature type="chain" id="PRO_1000204509" description="ATP-dependent protease subunit HslV">
    <location>
        <begin position="1"/>
        <end position="177"/>
    </location>
</feature>
<feature type="active site" evidence="1">
    <location>
        <position position="7"/>
    </location>
</feature>
<feature type="binding site" evidence="1">
    <location>
        <position position="162"/>
    </location>
    <ligand>
        <name>Na(+)</name>
        <dbReference type="ChEBI" id="CHEBI:29101"/>
    </ligand>
</feature>
<feature type="binding site" evidence="1">
    <location>
        <position position="165"/>
    </location>
    <ligand>
        <name>Na(+)</name>
        <dbReference type="ChEBI" id="CHEBI:29101"/>
    </ligand>
</feature>
<feature type="binding site" evidence="1">
    <location>
        <position position="168"/>
    </location>
    <ligand>
        <name>Na(+)</name>
        <dbReference type="ChEBI" id="CHEBI:29101"/>
    </ligand>
</feature>
<gene>
    <name evidence="1" type="primary">hslV</name>
    <name type="ordered locus">LEPBI_I2355</name>
</gene>